<gene>
    <name type="primary">RPL39</name>
    <name type="ORF">TTHERM_00526400A</name>
</gene>
<organism>
    <name type="scientific">Tetrahymena thermophila (strain SB210)</name>
    <dbReference type="NCBI Taxonomy" id="312017"/>
    <lineage>
        <taxon>Eukaryota</taxon>
        <taxon>Sar</taxon>
        <taxon>Alveolata</taxon>
        <taxon>Ciliophora</taxon>
        <taxon>Intramacronucleata</taxon>
        <taxon>Oligohymenophorea</taxon>
        <taxon>Hymenostomatida</taxon>
        <taxon>Tetrahymenina</taxon>
        <taxon>Tetrahymenidae</taxon>
        <taxon>Tetrahymena</taxon>
    </lineage>
</organism>
<protein>
    <recommendedName>
        <fullName evidence="1">Large ribosomal subunit protein eL39</fullName>
    </recommendedName>
    <alternativeName>
        <fullName>60S ribosomal protein L39</fullName>
    </alternativeName>
</protein>
<accession>P0DJ61</accession>
<evidence type="ECO:0000305" key="1"/>
<name>RL39_TETTS</name>
<feature type="chain" id="PRO_0000413523" description="Large ribosomal subunit protein eL39">
    <location>
        <begin position="1"/>
        <end position="52"/>
    </location>
</feature>
<dbReference type="EMBL" id="GG662209">
    <property type="protein sequence ID" value="EAS07809.2"/>
    <property type="status" value="ALT_SEQ"/>
    <property type="molecule type" value="Genomic_DNA"/>
</dbReference>
<dbReference type="RefSeq" id="XP_001028051.2">
    <property type="nucleotide sequence ID" value="XM_001028051.3"/>
</dbReference>
<dbReference type="PDB" id="4V8P">
    <property type="method" value="X-ray"/>
    <property type="resolution" value="3.52 A"/>
    <property type="chains" value="AB/DB/FB/HB=1-52"/>
</dbReference>
<dbReference type="PDBsum" id="4V8P"/>
<dbReference type="SMR" id="P0DJ61"/>
<dbReference type="FunCoup" id="P0DJ61">
    <property type="interactions" value="115"/>
</dbReference>
<dbReference type="IntAct" id="P0DJ61">
    <property type="interactions" value="1"/>
</dbReference>
<dbReference type="STRING" id="312017.P0DJ61"/>
<dbReference type="KEGG" id="tet:TTHERM_00526400"/>
<dbReference type="eggNOG" id="KOG0002">
    <property type="taxonomic scope" value="Eukaryota"/>
</dbReference>
<dbReference type="InParanoid" id="P0DJ61"/>
<dbReference type="OrthoDB" id="287024at2759"/>
<dbReference type="Proteomes" id="UP000009168">
    <property type="component" value="Unassembled WGS sequence"/>
</dbReference>
<dbReference type="GO" id="GO:0022625">
    <property type="term" value="C:cytosolic large ribosomal subunit"/>
    <property type="evidence" value="ECO:0007669"/>
    <property type="project" value="TreeGrafter"/>
</dbReference>
<dbReference type="GO" id="GO:0003735">
    <property type="term" value="F:structural constituent of ribosome"/>
    <property type="evidence" value="ECO:0007669"/>
    <property type="project" value="InterPro"/>
</dbReference>
<dbReference type="GO" id="GO:0006412">
    <property type="term" value="P:translation"/>
    <property type="evidence" value="ECO:0007669"/>
    <property type="project" value="InterPro"/>
</dbReference>
<dbReference type="FunFam" id="1.10.1620.10:FF:000001">
    <property type="entry name" value="60S ribosomal protein-like L39"/>
    <property type="match status" value="1"/>
</dbReference>
<dbReference type="Gene3D" id="1.10.1620.10">
    <property type="entry name" value="Ribosomal protein L39e"/>
    <property type="match status" value="1"/>
</dbReference>
<dbReference type="HAMAP" id="MF_00629">
    <property type="entry name" value="Ribosomal_eL39"/>
    <property type="match status" value="1"/>
</dbReference>
<dbReference type="InterPro" id="IPR000077">
    <property type="entry name" value="Ribosomal_eL39"/>
</dbReference>
<dbReference type="InterPro" id="IPR020083">
    <property type="entry name" value="Ribosomal_eL39_CS"/>
</dbReference>
<dbReference type="InterPro" id="IPR023626">
    <property type="entry name" value="Ribosomal_eL39_dom_sf"/>
</dbReference>
<dbReference type="PANTHER" id="PTHR19970:SF0">
    <property type="entry name" value="LARGE RIBOSOMAL SUBUNIT PROTEIN EL39"/>
    <property type="match status" value="1"/>
</dbReference>
<dbReference type="PANTHER" id="PTHR19970">
    <property type="entry name" value="RIBOSOMAL PROTEIN L39E"/>
    <property type="match status" value="1"/>
</dbReference>
<dbReference type="Pfam" id="PF00832">
    <property type="entry name" value="Ribosomal_L39"/>
    <property type="match status" value="1"/>
</dbReference>
<dbReference type="SUPFAM" id="SSF48662">
    <property type="entry name" value="Ribosomal protein L39e"/>
    <property type="match status" value="1"/>
</dbReference>
<dbReference type="PROSITE" id="PS00051">
    <property type="entry name" value="RIBOSOMAL_L39E"/>
    <property type="match status" value="1"/>
</dbReference>
<proteinExistence type="evidence at protein level"/>
<reference key="1">
    <citation type="journal article" date="2006" name="PLoS Biol.">
        <title>Macronuclear genome sequence of the ciliate Tetrahymena thermophila, a model eukaryote.</title>
        <authorList>
            <person name="Eisen J.A."/>
            <person name="Coyne R.S."/>
            <person name="Wu M."/>
            <person name="Wu D."/>
            <person name="Thiagarajan M."/>
            <person name="Wortman J.R."/>
            <person name="Badger J.H."/>
            <person name="Ren Q."/>
            <person name="Amedeo P."/>
            <person name="Jones K.M."/>
            <person name="Tallon L.J."/>
            <person name="Delcher A.L."/>
            <person name="Salzberg S.L."/>
            <person name="Silva J.C."/>
            <person name="Haas B.J."/>
            <person name="Majoros W.H."/>
            <person name="Farzad M."/>
            <person name="Carlton J.M."/>
            <person name="Smith R.K. Jr."/>
            <person name="Garg J."/>
            <person name="Pearlman R.E."/>
            <person name="Karrer K.M."/>
            <person name="Sun L."/>
            <person name="Manning G."/>
            <person name="Elde N.C."/>
            <person name="Turkewitz A.P."/>
            <person name="Asai D.J."/>
            <person name="Wilkes D.E."/>
            <person name="Wang Y."/>
            <person name="Cai H."/>
            <person name="Collins K."/>
            <person name="Stewart B.A."/>
            <person name="Lee S.R."/>
            <person name="Wilamowska K."/>
            <person name="Weinberg Z."/>
            <person name="Ruzzo W.L."/>
            <person name="Wloga D."/>
            <person name="Gaertig J."/>
            <person name="Frankel J."/>
            <person name="Tsao C.-C."/>
            <person name="Gorovsky M.A."/>
            <person name="Keeling P.J."/>
            <person name="Waller R.F."/>
            <person name="Patron N.J."/>
            <person name="Cherry J.M."/>
            <person name="Stover N.A."/>
            <person name="Krieger C.J."/>
            <person name="del Toro C."/>
            <person name="Ryder H.F."/>
            <person name="Williamson S.C."/>
            <person name="Barbeau R.A."/>
            <person name="Hamilton E.P."/>
            <person name="Orias E."/>
        </authorList>
    </citation>
    <scope>NUCLEOTIDE SEQUENCE [LARGE SCALE GENOMIC DNA]</scope>
    <source>
        <strain>SB210</strain>
    </source>
</reference>
<comment type="similarity">
    <text evidence="1">Belongs to the eukaryotic ribosomal protein eL39 family.</text>
</comment>
<comment type="sequence caution" evidence="1">
    <conflict type="erroneous gene model prediction">
        <sequence resource="EMBL-CDS" id="EAS07809"/>
    </conflict>
</comment>
<keyword id="KW-0002">3D-structure</keyword>
<keyword id="KW-1185">Reference proteome</keyword>
<keyword id="KW-0687">Ribonucleoprotein</keyword>
<keyword id="KW-0689">Ribosomal protein</keyword>
<sequence>MGANKTLNMKKRFGRKIKQNRPLPNWYRYKSDTNIRYNSKRRNWRRTKLKIY</sequence>